<name>BIOF2_BACVZ</name>
<feature type="chain" id="PRO_0000380904" description="Putative 8-amino-7-oxononanoate synthase 2">
    <location>
        <begin position="1"/>
        <end position="386"/>
    </location>
</feature>
<feature type="binding site" evidence="1">
    <location>
        <position position="21"/>
    </location>
    <ligand>
        <name>substrate</name>
    </ligand>
</feature>
<feature type="binding site" evidence="1">
    <location>
        <begin position="104"/>
        <end position="105"/>
    </location>
    <ligand>
        <name>pyridoxal 5'-phosphate</name>
        <dbReference type="ChEBI" id="CHEBI:597326"/>
    </ligand>
</feature>
<feature type="binding site" evidence="1">
    <location>
        <position position="129"/>
    </location>
    <ligand>
        <name>substrate</name>
    </ligand>
</feature>
<feature type="binding site" evidence="1">
    <location>
        <position position="176"/>
    </location>
    <ligand>
        <name>pyridoxal 5'-phosphate</name>
        <dbReference type="ChEBI" id="CHEBI:597326"/>
    </ligand>
</feature>
<feature type="binding site" evidence="1">
    <location>
        <begin position="201"/>
        <end position="204"/>
    </location>
    <ligand>
        <name>pyridoxal 5'-phosphate</name>
        <dbReference type="ChEBI" id="CHEBI:597326"/>
    </ligand>
</feature>
<feature type="binding site" evidence="1">
    <location>
        <begin position="230"/>
        <end position="233"/>
    </location>
    <ligand>
        <name>pyridoxal 5'-phosphate</name>
        <dbReference type="ChEBI" id="CHEBI:597326"/>
    </ligand>
</feature>
<feature type="modified residue" description="N6-(pyridoxal phosphate)lysine" evidence="1">
    <location>
        <position position="233"/>
    </location>
</feature>
<protein>
    <recommendedName>
        <fullName>Putative 8-amino-7-oxononanoate synthase 2</fullName>
        <shortName>AONS</shortName>
        <ecNumber>2.3.1.47</ecNumber>
    </recommendedName>
    <alternativeName>
        <fullName>7-keto-8-amino-pelargonic acid synthase</fullName>
        <shortName>7-KAP synthase</shortName>
    </alternativeName>
    <alternativeName>
        <fullName>8-amino-7-ketopelargonate synthase</fullName>
    </alternativeName>
</protein>
<dbReference type="EC" id="2.3.1.47"/>
<dbReference type="EMBL" id="CP000560">
    <property type="protein sequence ID" value="ABS74190.1"/>
    <property type="molecule type" value="Genomic_DNA"/>
</dbReference>
<dbReference type="RefSeq" id="WP_012117686.1">
    <property type="nucleotide sequence ID" value="NC_009725.2"/>
</dbReference>
<dbReference type="SMR" id="A7Z5B4"/>
<dbReference type="GeneID" id="93080956"/>
<dbReference type="KEGG" id="bay:RBAM_018270"/>
<dbReference type="HOGENOM" id="CLU_015846_11_3_9"/>
<dbReference type="UniPathway" id="UPA00078"/>
<dbReference type="Proteomes" id="UP000001120">
    <property type="component" value="Chromosome"/>
</dbReference>
<dbReference type="GO" id="GO:0008710">
    <property type="term" value="F:8-amino-7-oxononanoate synthase activity"/>
    <property type="evidence" value="ECO:0007669"/>
    <property type="project" value="UniProtKB-EC"/>
</dbReference>
<dbReference type="GO" id="GO:0030170">
    <property type="term" value="F:pyridoxal phosphate binding"/>
    <property type="evidence" value="ECO:0007669"/>
    <property type="project" value="InterPro"/>
</dbReference>
<dbReference type="GO" id="GO:0009102">
    <property type="term" value="P:biotin biosynthetic process"/>
    <property type="evidence" value="ECO:0007669"/>
    <property type="project" value="UniProtKB-UniPathway"/>
</dbReference>
<dbReference type="CDD" id="cd06454">
    <property type="entry name" value="KBL_like"/>
    <property type="match status" value="1"/>
</dbReference>
<dbReference type="Gene3D" id="3.90.1150.10">
    <property type="entry name" value="Aspartate Aminotransferase, domain 1"/>
    <property type="match status" value="1"/>
</dbReference>
<dbReference type="Gene3D" id="3.40.640.10">
    <property type="entry name" value="Type I PLP-dependent aspartate aminotransferase-like (Major domain)"/>
    <property type="match status" value="1"/>
</dbReference>
<dbReference type="InterPro" id="IPR001917">
    <property type="entry name" value="Aminotrans_II_pyridoxalP_BS"/>
</dbReference>
<dbReference type="InterPro" id="IPR004839">
    <property type="entry name" value="Aminotransferase_I/II_large"/>
</dbReference>
<dbReference type="InterPro" id="IPR050087">
    <property type="entry name" value="AON_synthase_class-II"/>
</dbReference>
<dbReference type="InterPro" id="IPR004723">
    <property type="entry name" value="AONS_Archaea/Proteobacteria"/>
</dbReference>
<dbReference type="InterPro" id="IPR015424">
    <property type="entry name" value="PyrdxlP-dep_Trfase"/>
</dbReference>
<dbReference type="InterPro" id="IPR015421">
    <property type="entry name" value="PyrdxlP-dep_Trfase_major"/>
</dbReference>
<dbReference type="InterPro" id="IPR015422">
    <property type="entry name" value="PyrdxlP-dep_Trfase_small"/>
</dbReference>
<dbReference type="NCBIfam" id="TIGR00858">
    <property type="entry name" value="bioF"/>
    <property type="match status" value="1"/>
</dbReference>
<dbReference type="PANTHER" id="PTHR13693">
    <property type="entry name" value="CLASS II AMINOTRANSFERASE/8-AMINO-7-OXONONANOATE SYNTHASE"/>
    <property type="match status" value="1"/>
</dbReference>
<dbReference type="PANTHER" id="PTHR13693:SF3">
    <property type="entry name" value="LD36009P"/>
    <property type="match status" value="1"/>
</dbReference>
<dbReference type="Pfam" id="PF00155">
    <property type="entry name" value="Aminotran_1_2"/>
    <property type="match status" value="1"/>
</dbReference>
<dbReference type="SUPFAM" id="SSF53383">
    <property type="entry name" value="PLP-dependent transferases"/>
    <property type="match status" value="1"/>
</dbReference>
<dbReference type="PROSITE" id="PS00599">
    <property type="entry name" value="AA_TRANSFER_CLASS_2"/>
    <property type="match status" value="1"/>
</dbReference>
<reference key="1">
    <citation type="journal article" date="2007" name="Nat. Biotechnol.">
        <title>Comparative analysis of the complete genome sequence of the plant growth-promoting bacterium Bacillus amyloliquefaciens FZB42.</title>
        <authorList>
            <person name="Chen X.H."/>
            <person name="Koumoutsi A."/>
            <person name="Scholz R."/>
            <person name="Eisenreich A."/>
            <person name="Schneider K."/>
            <person name="Heinemeyer I."/>
            <person name="Morgenstern B."/>
            <person name="Voss B."/>
            <person name="Hess W.R."/>
            <person name="Reva O."/>
            <person name="Junge H."/>
            <person name="Voigt B."/>
            <person name="Jungblut P.R."/>
            <person name="Vater J."/>
            <person name="Suessmuth R."/>
            <person name="Liesegang H."/>
            <person name="Strittmatter A."/>
            <person name="Gottschalk G."/>
            <person name="Borriss R."/>
        </authorList>
    </citation>
    <scope>NUCLEOTIDE SEQUENCE [LARGE SCALE GENOMIC DNA]</scope>
    <source>
        <strain>DSM 23117 / BGSC 10A6 / LMG 26770 / FZB42</strain>
    </source>
</reference>
<organism>
    <name type="scientific">Bacillus velezensis (strain DSM 23117 / BGSC 10A6 / LMG 26770 / FZB42)</name>
    <name type="common">Bacillus amyloliquefaciens subsp. plantarum</name>
    <dbReference type="NCBI Taxonomy" id="326423"/>
    <lineage>
        <taxon>Bacteria</taxon>
        <taxon>Bacillati</taxon>
        <taxon>Bacillota</taxon>
        <taxon>Bacilli</taxon>
        <taxon>Bacillales</taxon>
        <taxon>Bacillaceae</taxon>
        <taxon>Bacillus</taxon>
        <taxon>Bacillus amyloliquefaciens group</taxon>
    </lineage>
</organism>
<gene>
    <name type="primary">bioF</name>
    <name type="ordered locus">RBAM_018270</name>
</gene>
<keyword id="KW-0093">Biotin biosynthesis</keyword>
<keyword id="KW-0663">Pyridoxal phosphate</keyword>
<keyword id="KW-0808">Transferase</keyword>
<evidence type="ECO:0000250" key="1"/>
<evidence type="ECO:0000305" key="2"/>
<proteinExistence type="inferred from homology"/>
<comment type="function">
    <text evidence="1">Catalyzes the decarboxylative condensation of pimeloyl-[acyl-carrier protein] and L-alanine to produce 8-amino-7-oxononanoate (AON), [acyl-carrier protein], and carbon dioxide.</text>
</comment>
<comment type="catalytic activity">
    <reaction>
        <text>6-carboxyhexanoyl-[ACP] + L-alanine + H(+) = (8S)-8-amino-7-oxononanoate + holo-[ACP] + CO2</text>
        <dbReference type="Rhea" id="RHEA:42288"/>
        <dbReference type="Rhea" id="RHEA-COMP:9685"/>
        <dbReference type="Rhea" id="RHEA-COMP:9955"/>
        <dbReference type="ChEBI" id="CHEBI:15378"/>
        <dbReference type="ChEBI" id="CHEBI:16526"/>
        <dbReference type="ChEBI" id="CHEBI:57972"/>
        <dbReference type="ChEBI" id="CHEBI:64479"/>
        <dbReference type="ChEBI" id="CHEBI:78846"/>
        <dbReference type="ChEBI" id="CHEBI:149468"/>
        <dbReference type="EC" id="2.3.1.47"/>
    </reaction>
</comment>
<comment type="cofactor">
    <cofactor evidence="1">
        <name>pyridoxal 5'-phosphate</name>
        <dbReference type="ChEBI" id="CHEBI:597326"/>
    </cofactor>
</comment>
<comment type="pathway">
    <text>Cofactor biosynthesis; biotin biosynthesis.</text>
</comment>
<comment type="subunit">
    <text evidence="1">Homodimer.</text>
</comment>
<comment type="similarity">
    <text evidence="2">Belongs to the class-II pyridoxal-phosphate-dependent aminotransferase family. BioF subfamily.</text>
</comment>
<sequence length="386" mass="41753">MDFDGWLLGRLDAVKRDGLYRTLRTQETALKTKGQKRQTWASNDYLGLSKDERLITAAQTAMSRFGAGSGGSRLTTGNTVWHEKLEHTIADFKQTEAALLFSSGYLANIGVLASLPQKGDVILSDQLNHASIVDGCRLSKAETIVYRHIDMADLEKKLASVQARNRRFIVTDGVFSMDGTIAPLDRIMALAKQYQAFVIADDAHATGVLGENGGGTSDYFGVCPDVVIGTLSKAVGTEGGFAAGSNIFIDFLLNQARTFIFQTALPPSICAASHTAFDIISDMHDTRRELQSSVKMIKTRLADMGFTVRGGDTPIIPVIIGDAKTAVSAAALLEKKGICAPAIRPPAVPEGESRIRLTVTADRSLQDIDELTEAFDSIRKELNINK</sequence>
<accession>A7Z5B4</accession>